<feature type="chain" id="PRO_1000074273" description="tRNA sulfurtransferase">
    <location>
        <begin position="1"/>
        <end position="484"/>
    </location>
</feature>
<feature type="domain" description="THUMP" evidence="1">
    <location>
        <begin position="63"/>
        <end position="167"/>
    </location>
</feature>
<feature type="domain" description="Rhodanese" evidence="1">
    <location>
        <begin position="406"/>
        <end position="484"/>
    </location>
</feature>
<feature type="active site" description="Cysteine persulfide intermediate" evidence="1">
    <location>
        <position position="458"/>
    </location>
</feature>
<feature type="binding site" evidence="1">
    <location>
        <begin position="185"/>
        <end position="186"/>
    </location>
    <ligand>
        <name>ATP</name>
        <dbReference type="ChEBI" id="CHEBI:30616"/>
    </ligand>
</feature>
<feature type="binding site" evidence="1">
    <location>
        <position position="267"/>
    </location>
    <ligand>
        <name>ATP</name>
        <dbReference type="ChEBI" id="CHEBI:30616"/>
    </ligand>
</feature>
<feature type="binding site" evidence="1">
    <location>
        <position position="289"/>
    </location>
    <ligand>
        <name>ATP</name>
        <dbReference type="ChEBI" id="CHEBI:30616"/>
    </ligand>
</feature>
<feature type="binding site" evidence="1">
    <location>
        <position position="298"/>
    </location>
    <ligand>
        <name>ATP</name>
        <dbReference type="ChEBI" id="CHEBI:30616"/>
    </ligand>
</feature>
<feature type="disulfide bond" description="Redox-active" evidence="1">
    <location>
        <begin position="346"/>
        <end position="458"/>
    </location>
</feature>
<gene>
    <name evidence="1" type="primary">thiI</name>
    <name type="ordered locus">Ssed_3324</name>
</gene>
<reference key="1">
    <citation type="submission" date="2007-08" db="EMBL/GenBank/DDBJ databases">
        <title>Complete sequence of Shewanella sediminis HAW-EB3.</title>
        <authorList>
            <consortium name="US DOE Joint Genome Institute"/>
            <person name="Copeland A."/>
            <person name="Lucas S."/>
            <person name="Lapidus A."/>
            <person name="Barry K."/>
            <person name="Glavina del Rio T."/>
            <person name="Dalin E."/>
            <person name="Tice H."/>
            <person name="Pitluck S."/>
            <person name="Chertkov O."/>
            <person name="Brettin T."/>
            <person name="Bruce D."/>
            <person name="Detter J.C."/>
            <person name="Han C."/>
            <person name="Schmutz J."/>
            <person name="Larimer F."/>
            <person name="Land M."/>
            <person name="Hauser L."/>
            <person name="Kyrpides N."/>
            <person name="Kim E."/>
            <person name="Zhao J.-S."/>
            <person name="Richardson P."/>
        </authorList>
    </citation>
    <scope>NUCLEOTIDE SEQUENCE [LARGE SCALE GENOMIC DNA]</scope>
    <source>
        <strain>HAW-EB3</strain>
    </source>
</reference>
<sequence length="484" mass="54952">MKFIVKLFPEIMMKSKPVRMRFTKMLETNIRNVLKKVDESAKVKREWDKIMVLVPSDRPDLVEAFADRLSCIPGIAHVLQVNESTFESVDDIYQQTLALYKEQLVGKTFCVRVKRVGNHDFKSIEVERYVGGGLNQFTEATGVKLKNPDMTINLEIDRENLYLVVNRIQGLGGYPMATQEDVLSLISGGFDSGVSSYQFIKRGSRTHYCFFNLGGDQHEIGVKQVAYHLWQKYGESHKVKFISVPFDPVVTEILEKIDNGQMGVILKRMMMRTAARLADKMGIQALVTGEAMGQVSSQTLTNLNVIDRCTEQLILRPLIAMDKQDIINLSRKIGTEDFSKSIPEYCGVISQKPTVKAVLSKIEAEEQKFSDDLIERVLETAEIIDIREIATSMDTKITETETVGDVNSNEVIIDVRAPEEEEKDPLKLEGIEIKTIPFFKLATQFADLDKAKTYLLYCDRGVMSKLQALYLQEQGYENVKVYRP</sequence>
<proteinExistence type="inferred from homology"/>
<dbReference type="EC" id="2.8.1.4" evidence="1"/>
<dbReference type="EMBL" id="CP000821">
    <property type="protein sequence ID" value="ABV37928.1"/>
    <property type="molecule type" value="Genomic_DNA"/>
</dbReference>
<dbReference type="RefSeq" id="WP_012143658.1">
    <property type="nucleotide sequence ID" value="NC_009831.1"/>
</dbReference>
<dbReference type="SMR" id="A8FYK5"/>
<dbReference type="STRING" id="425104.Ssed_3324"/>
<dbReference type="KEGG" id="sse:Ssed_3324"/>
<dbReference type="eggNOG" id="COG0301">
    <property type="taxonomic scope" value="Bacteria"/>
</dbReference>
<dbReference type="eggNOG" id="COG0607">
    <property type="taxonomic scope" value="Bacteria"/>
</dbReference>
<dbReference type="HOGENOM" id="CLU_037952_4_1_6"/>
<dbReference type="OrthoDB" id="9773948at2"/>
<dbReference type="UniPathway" id="UPA00060"/>
<dbReference type="Proteomes" id="UP000002015">
    <property type="component" value="Chromosome"/>
</dbReference>
<dbReference type="GO" id="GO:0005829">
    <property type="term" value="C:cytosol"/>
    <property type="evidence" value="ECO:0007669"/>
    <property type="project" value="TreeGrafter"/>
</dbReference>
<dbReference type="GO" id="GO:0005524">
    <property type="term" value="F:ATP binding"/>
    <property type="evidence" value="ECO:0007669"/>
    <property type="project" value="UniProtKB-UniRule"/>
</dbReference>
<dbReference type="GO" id="GO:0004810">
    <property type="term" value="F:CCA tRNA nucleotidyltransferase activity"/>
    <property type="evidence" value="ECO:0007669"/>
    <property type="project" value="InterPro"/>
</dbReference>
<dbReference type="GO" id="GO:0000049">
    <property type="term" value="F:tRNA binding"/>
    <property type="evidence" value="ECO:0007669"/>
    <property type="project" value="UniProtKB-UniRule"/>
</dbReference>
<dbReference type="GO" id="GO:0140741">
    <property type="term" value="F:tRNA-uracil-4 sulfurtransferase activity"/>
    <property type="evidence" value="ECO:0007669"/>
    <property type="project" value="UniProtKB-EC"/>
</dbReference>
<dbReference type="GO" id="GO:0009228">
    <property type="term" value="P:thiamine biosynthetic process"/>
    <property type="evidence" value="ECO:0007669"/>
    <property type="project" value="UniProtKB-KW"/>
</dbReference>
<dbReference type="GO" id="GO:0009229">
    <property type="term" value="P:thiamine diphosphate biosynthetic process"/>
    <property type="evidence" value="ECO:0007669"/>
    <property type="project" value="UniProtKB-UniRule"/>
</dbReference>
<dbReference type="GO" id="GO:0052837">
    <property type="term" value="P:thiazole biosynthetic process"/>
    <property type="evidence" value="ECO:0007669"/>
    <property type="project" value="InterPro"/>
</dbReference>
<dbReference type="GO" id="GO:0002937">
    <property type="term" value="P:tRNA 4-thiouridine biosynthesis"/>
    <property type="evidence" value="ECO:0007669"/>
    <property type="project" value="TreeGrafter"/>
</dbReference>
<dbReference type="CDD" id="cd01712">
    <property type="entry name" value="PPase_ThiI"/>
    <property type="match status" value="1"/>
</dbReference>
<dbReference type="CDD" id="cd00158">
    <property type="entry name" value="RHOD"/>
    <property type="match status" value="1"/>
</dbReference>
<dbReference type="CDD" id="cd11716">
    <property type="entry name" value="THUMP_ThiI"/>
    <property type="match status" value="1"/>
</dbReference>
<dbReference type="FunFam" id="3.40.50.620:FF:000029">
    <property type="entry name" value="tRNA sulfurtransferase"/>
    <property type="match status" value="1"/>
</dbReference>
<dbReference type="Gene3D" id="3.30.2130.30">
    <property type="match status" value="1"/>
</dbReference>
<dbReference type="Gene3D" id="3.40.50.620">
    <property type="entry name" value="HUPs"/>
    <property type="match status" value="1"/>
</dbReference>
<dbReference type="Gene3D" id="3.40.250.10">
    <property type="entry name" value="Rhodanese-like domain"/>
    <property type="match status" value="1"/>
</dbReference>
<dbReference type="HAMAP" id="MF_00021">
    <property type="entry name" value="ThiI"/>
    <property type="match status" value="1"/>
</dbReference>
<dbReference type="InterPro" id="IPR001763">
    <property type="entry name" value="Rhodanese-like_dom"/>
</dbReference>
<dbReference type="InterPro" id="IPR036873">
    <property type="entry name" value="Rhodanese-like_dom_sf"/>
</dbReference>
<dbReference type="InterPro" id="IPR014729">
    <property type="entry name" value="Rossmann-like_a/b/a_fold"/>
</dbReference>
<dbReference type="InterPro" id="IPR020536">
    <property type="entry name" value="ThiI_AANH"/>
</dbReference>
<dbReference type="InterPro" id="IPR054173">
    <property type="entry name" value="ThiI_fer"/>
</dbReference>
<dbReference type="InterPro" id="IPR049961">
    <property type="entry name" value="ThiI_N"/>
</dbReference>
<dbReference type="InterPro" id="IPR026340">
    <property type="entry name" value="THII_Thiazole_biosynth_dom"/>
</dbReference>
<dbReference type="InterPro" id="IPR004114">
    <property type="entry name" value="THUMP_dom"/>
</dbReference>
<dbReference type="InterPro" id="IPR049962">
    <property type="entry name" value="THUMP_ThiI"/>
</dbReference>
<dbReference type="InterPro" id="IPR003720">
    <property type="entry name" value="tRNA_STrfase"/>
</dbReference>
<dbReference type="InterPro" id="IPR050102">
    <property type="entry name" value="tRNA_sulfurtransferase_ThiI"/>
</dbReference>
<dbReference type="NCBIfam" id="TIGR04271">
    <property type="entry name" value="ThiI_C_thiazole"/>
    <property type="match status" value="1"/>
</dbReference>
<dbReference type="NCBIfam" id="TIGR00342">
    <property type="entry name" value="tRNA uracil 4-sulfurtransferase ThiI"/>
    <property type="match status" value="1"/>
</dbReference>
<dbReference type="PANTHER" id="PTHR43209">
    <property type="entry name" value="TRNA SULFURTRANSFERASE"/>
    <property type="match status" value="1"/>
</dbReference>
<dbReference type="PANTHER" id="PTHR43209:SF1">
    <property type="entry name" value="TRNA SULFURTRANSFERASE"/>
    <property type="match status" value="1"/>
</dbReference>
<dbReference type="Pfam" id="PF00581">
    <property type="entry name" value="Rhodanese"/>
    <property type="match status" value="1"/>
</dbReference>
<dbReference type="Pfam" id="PF02568">
    <property type="entry name" value="ThiI"/>
    <property type="match status" value="1"/>
</dbReference>
<dbReference type="Pfam" id="PF22025">
    <property type="entry name" value="ThiI_fer"/>
    <property type="match status" value="1"/>
</dbReference>
<dbReference type="Pfam" id="PF02926">
    <property type="entry name" value="THUMP"/>
    <property type="match status" value="1"/>
</dbReference>
<dbReference type="SMART" id="SM00981">
    <property type="entry name" value="THUMP"/>
    <property type="match status" value="1"/>
</dbReference>
<dbReference type="SUPFAM" id="SSF52402">
    <property type="entry name" value="Adenine nucleotide alpha hydrolases-like"/>
    <property type="match status" value="1"/>
</dbReference>
<dbReference type="SUPFAM" id="SSF52821">
    <property type="entry name" value="Rhodanese/Cell cycle control phosphatase"/>
    <property type="match status" value="1"/>
</dbReference>
<dbReference type="SUPFAM" id="SSF143437">
    <property type="entry name" value="THUMP domain-like"/>
    <property type="match status" value="1"/>
</dbReference>
<dbReference type="PROSITE" id="PS50206">
    <property type="entry name" value="RHODANESE_3"/>
    <property type="match status" value="1"/>
</dbReference>
<dbReference type="PROSITE" id="PS51165">
    <property type="entry name" value="THUMP"/>
    <property type="match status" value="1"/>
</dbReference>
<keyword id="KW-0067">ATP-binding</keyword>
<keyword id="KW-0963">Cytoplasm</keyword>
<keyword id="KW-1015">Disulfide bond</keyword>
<keyword id="KW-0547">Nucleotide-binding</keyword>
<keyword id="KW-0676">Redox-active center</keyword>
<keyword id="KW-1185">Reference proteome</keyword>
<keyword id="KW-0694">RNA-binding</keyword>
<keyword id="KW-0784">Thiamine biosynthesis</keyword>
<keyword id="KW-0808">Transferase</keyword>
<keyword id="KW-0820">tRNA-binding</keyword>
<evidence type="ECO:0000255" key="1">
    <source>
        <dbReference type="HAMAP-Rule" id="MF_00021"/>
    </source>
</evidence>
<protein>
    <recommendedName>
        <fullName evidence="1">tRNA sulfurtransferase</fullName>
        <ecNumber evidence="1">2.8.1.4</ecNumber>
    </recommendedName>
    <alternativeName>
        <fullName evidence="1">Sulfur carrier protein ThiS sulfurtransferase</fullName>
    </alternativeName>
    <alternativeName>
        <fullName evidence="1">Thiamine biosynthesis protein ThiI</fullName>
    </alternativeName>
    <alternativeName>
        <fullName evidence="1">tRNA 4-thiouridine synthase</fullName>
    </alternativeName>
</protein>
<name>THII_SHESH</name>
<comment type="function">
    <text evidence="1">Catalyzes the ATP-dependent transfer of a sulfur to tRNA to produce 4-thiouridine in position 8 of tRNAs, which functions as a near-UV photosensor. Also catalyzes the transfer of sulfur to the sulfur carrier protein ThiS, forming ThiS-thiocarboxylate. This is a step in the synthesis of thiazole, in the thiamine biosynthesis pathway. The sulfur is donated as persulfide by IscS.</text>
</comment>
<comment type="catalytic activity">
    <reaction evidence="1">
        <text>[ThiI sulfur-carrier protein]-S-sulfanyl-L-cysteine + a uridine in tRNA + 2 reduced [2Fe-2S]-[ferredoxin] + ATP + H(+) = [ThiI sulfur-carrier protein]-L-cysteine + a 4-thiouridine in tRNA + 2 oxidized [2Fe-2S]-[ferredoxin] + AMP + diphosphate</text>
        <dbReference type="Rhea" id="RHEA:24176"/>
        <dbReference type="Rhea" id="RHEA-COMP:10000"/>
        <dbReference type="Rhea" id="RHEA-COMP:10001"/>
        <dbReference type="Rhea" id="RHEA-COMP:13337"/>
        <dbReference type="Rhea" id="RHEA-COMP:13338"/>
        <dbReference type="Rhea" id="RHEA-COMP:13339"/>
        <dbReference type="Rhea" id="RHEA-COMP:13340"/>
        <dbReference type="ChEBI" id="CHEBI:15378"/>
        <dbReference type="ChEBI" id="CHEBI:29950"/>
        <dbReference type="ChEBI" id="CHEBI:30616"/>
        <dbReference type="ChEBI" id="CHEBI:33019"/>
        <dbReference type="ChEBI" id="CHEBI:33737"/>
        <dbReference type="ChEBI" id="CHEBI:33738"/>
        <dbReference type="ChEBI" id="CHEBI:61963"/>
        <dbReference type="ChEBI" id="CHEBI:65315"/>
        <dbReference type="ChEBI" id="CHEBI:136798"/>
        <dbReference type="ChEBI" id="CHEBI:456215"/>
        <dbReference type="EC" id="2.8.1.4"/>
    </reaction>
</comment>
<comment type="catalytic activity">
    <reaction evidence="1">
        <text>[ThiS sulfur-carrier protein]-C-terminal Gly-Gly-AMP + S-sulfanyl-L-cysteinyl-[cysteine desulfurase] + AH2 = [ThiS sulfur-carrier protein]-C-terminal-Gly-aminoethanethioate + L-cysteinyl-[cysteine desulfurase] + A + AMP + 2 H(+)</text>
        <dbReference type="Rhea" id="RHEA:43340"/>
        <dbReference type="Rhea" id="RHEA-COMP:12157"/>
        <dbReference type="Rhea" id="RHEA-COMP:12158"/>
        <dbReference type="Rhea" id="RHEA-COMP:12910"/>
        <dbReference type="Rhea" id="RHEA-COMP:19908"/>
        <dbReference type="ChEBI" id="CHEBI:13193"/>
        <dbReference type="ChEBI" id="CHEBI:15378"/>
        <dbReference type="ChEBI" id="CHEBI:17499"/>
        <dbReference type="ChEBI" id="CHEBI:29950"/>
        <dbReference type="ChEBI" id="CHEBI:61963"/>
        <dbReference type="ChEBI" id="CHEBI:90618"/>
        <dbReference type="ChEBI" id="CHEBI:232372"/>
        <dbReference type="ChEBI" id="CHEBI:456215"/>
    </reaction>
</comment>
<comment type="pathway">
    <text evidence="1">Cofactor biosynthesis; thiamine diphosphate biosynthesis.</text>
</comment>
<comment type="subcellular location">
    <subcellularLocation>
        <location evidence="1">Cytoplasm</location>
    </subcellularLocation>
</comment>
<comment type="similarity">
    <text evidence="1">Belongs to the ThiI family.</text>
</comment>
<accession>A8FYK5</accession>
<organism>
    <name type="scientific">Shewanella sediminis (strain HAW-EB3)</name>
    <dbReference type="NCBI Taxonomy" id="425104"/>
    <lineage>
        <taxon>Bacteria</taxon>
        <taxon>Pseudomonadati</taxon>
        <taxon>Pseudomonadota</taxon>
        <taxon>Gammaproteobacteria</taxon>
        <taxon>Alteromonadales</taxon>
        <taxon>Shewanellaceae</taxon>
        <taxon>Shewanella</taxon>
    </lineage>
</organism>